<dbReference type="EMBL" id="AE017223">
    <property type="protein sequence ID" value="AAX75085.1"/>
    <property type="molecule type" value="Genomic_DNA"/>
</dbReference>
<dbReference type="RefSeq" id="WP_002966965.1">
    <property type="nucleotide sequence ID" value="NC_006932.1"/>
</dbReference>
<dbReference type="SMR" id="Q57B99"/>
<dbReference type="EnsemblBacteria" id="AAX75085">
    <property type="protein sequence ID" value="AAX75085"/>
    <property type="gene ID" value="BruAb1_1767"/>
</dbReference>
<dbReference type="KEGG" id="bmb:BruAb1_1767"/>
<dbReference type="HOGENOM" id="CLU_027128_6_0_5"/>
<dbReference type="Proteomes" id="UP000000540">
    <property type="component" value="Chromosome I"/>
</dbReference>
<dbReference type="GO" id="GO:0006865">
    <property type="term" value="P:amino acid transport"/>
    <property type="evidence" value="ECO:0007669"/>
    <property type="project" value="UniProtKB-KW"/>
</dbReference>
<dbReference type="CDD" id="cd06342">
    <property type="entry name" value="PBP1_ABC_LIVBP-like"/>
    <property type="match status" value="1"/>
</dbReference>
<dbReference type="Gene3D" id="3.40.50.2300">
    <property type="match status" value="2"/>
</dbReference>
<dbReference type="InterPro" id="IPR028081">
    <property type="entry name" value="Leu-bd"/>
</dbReference>
<dbReference type="InterPro" id="IPR000709">
    <property type="entry name" value="Leu_Ile_Val-bd"/>
</dbReference>
<dbReference type="InterPro" id="IPR028082">
    <property type="entry name" value="Peripla_BP_I"/>
</dbReference>
<dbReference type="PANTHER" id="PTHR47151:SF2">
    <property type="entry name" value="AMINO ACID BINDING PROTEIN"/>
    <property type="match status" value="1"/>
</dbReference>
<dbReference type="PANTHER" id="PTHR47151">
    <property type="entry name" value="LEU/ILE/VAL-BINDING ABC TRANSPORTER SUBUNIT"/>
    <property type="match status" value="1"/>
</dbReference>
<dbReference type="Pfam" id="PF13458">
    <property type="entry name" value="Peripla_BP_6"/>
    <property type="match status" value="1"/>
</dbReference>
<dbReference type="PRINTS" id="PR00337">
    <property type="entry name" value="LEUILEVALBP"/>
</dbReference>
<dbReference type="SUPFAM" id="SSF53822">
    <property type="entry name" value="Periplasmic binding protein-like I"/>
    <property type="match status" value="1"/>
</dbReference>
<sequence>MRKTLFSGVALAAVIAFGGSAWADVLVGIGIPVTGPNAVYGAQIQKGAEAAIKEVNDAGGINGEKIAITIGDDVSDPKQGISVANKFAADGVKFVIGHFNSGVTIPASQVYAENGILEISPGATNPQYTEQGLWNTFRTCGRDDQQGTVAGQYIFDHFKDAKIAVIHDKTPYGQGLADETKKKLNELGTKETLYEGVNVGEKDFSALIAKLKQAGVNVVYWGGMHPEAGLLIRQMADQGLKAQFISGDGIVSNELASIAGDAVAGVMNTFGPDPRDDKANAELIKAFRDKGFEPEAYTLYSYAAVQSLAQAAKAAGSNDPQEVAKAMKEKGPFKTVLGDLSYDEKGDPKLPGYVMYKWEKGADGKYNYIQQ</sequence>
<keyword id="KW-0029">Amino-acid transport</keyword>
<keyword id="KW-0732">Signal</keyword>
<keyword id="KW-0813">Transport</keyword>
<name>LIVB1_BRUAB</name>
<protein>
    <recommendedName>
        <fullName>Leu/Ile/Val-binding protein homolog 1</fullName>
    </recommendedName>
</protein>
<feature type="signal peptide" evidence="1">
    <location>
        <begin position="1"/>
        <end position="23"/>
    </location>
</feature>
<feature type="chain" id="PRO_0000282522" description="Leu/Ile/Val-binding protein homolog 1">
    <location>
        <begin position="24"/>
        <end position="371"/>
    </location>
</feature>
<comment type="function">
    <text evidence="2">Component of an amino-acid transport system.</text>
</comment>
<comment type="similarity">
    <text evidence="2">Belongs to the leucine-binding protein family.</text>
</comment>
<proteinExistence type="inferred from homology"/>
<gene>
    <name type="ordered locus">BruAb1_1767</name>
</gene>
<reference key="1">
    <citation type="journal article" date="2005" name="J. Bacteriol.">
        <title>Completion of the genome sequence of Brucella abortus and comparison to the highly similar genomes of Brucella melitensis and Brucella suis.</title>
        <authorList>
            <person name="Halling S.M."/>
            <person name="Peterson-Burch B.D."/>
            <person name="Bricker B.J."/>
            <person name="Zuerner R.L."/>
            <person name="Qing Z."/>
            <person name="Li L.-L."/>
            <person name="Kapur V."/>
            <person name="Alt D.P."/>
            <person name="Olsen S.C."/>
        </authorList>
    </citation>
    <scope>NUCLEOTIDE SEQUENCE [LARGE SCALE GENOMIC DNA]</scope>
    <source>
        <strain>9-941</strain>
    </source>
</reference>
<evidence type="ECO:0000255" key="1"/>
<evidence type="ECO:0000305" key="2"/>
<accession>Q57B99</accession>
<organism>
    <name type="scientific">Brucella abortus biovar 1 (strain 9-941)</name>
    <dbReference type="NCBI Taxonomy" id="262698"/>
    <lineage>
        <taxon>Bacteria</taxon>
        <taxon>Pseudomonadati</taxon>
        <taxon>Pseudomonadota</taxon>
        <taxon>Alphaproteobacteria</taxon>
        <taxon>Hyphomicrobiales</taxon>
        <taxon>Brucellaceae</taxon>
        <taxon>Brucella/Ochrobactrum group</taxon>
        <taxon>Brucella</taxon>
    </lineage>
</organism>